<proteinExistence type="inferred from homology"/>
<organism>
    <name type="scientific">Mycobacterium sp. (strain KMS)</name>
    <dbReference type="NCBI Taxonomy" id="189918"/>
    <lineage>
        <taxon>Bacteria</taxon>
        <taxon>Bacillati</taxon>
        <taxon>Actinomycetota</taxon>
        <taxon>Actinomycetes</taxon>
        <taxon>Mycobacteriales</taxon>
        <taxon>Mycobacteriaceae</taxon>
        <taxon>Mycobacterium</taxon>
    </lineage>
</organism>
<comment type="function">
    <text evidence="1">An essential GTPase which binds GTP, GDP and possibly (p)ppGpp with moderate affinity, with high nucleotide exchange rates and a fairly low GTP hydrolysis rate. Plays a role in control of the cell cycle, stress response, ribosome biogenesis and in those bacteria that undergo differentiation, in morphogenesis control.</text>
</comment>
<comment type="cofactor">
    <cofactor evidence="1">
        <name>Mg(2+)</name>
        <dbReference type="ChEBI" id="CHEBI:18420"/>
    </cofactor>
</comment>
<comment type="subunit">
    <text evidence="1">Monomer.</text>
</comment>
<comment type="subcellular location">
    <subcellularLocation>
        <location evidence="1">Cytoplasm</location>
    </subcellularLocation>
</comment>
<comment type="similarity">
    <text evidence="1">Belongs to the TRAFAC class OBG-HflX-like GTPase superfamily. OBG GTPase family.</text>
</comment>
<name>OBG_MYCSK</name>
<keyword id="KW-0963">Cytoplasm</keyword>
<keyword id="KW-0342">GTP-binding</keyword>
<keyword id="KW-0378">Hydrolase</keyword>
<keyword id="KW-0460">Magnesium</keyword>
<keyword id="KW-0479">Metal-binding</keyword>
<keyword id="KW-0547">Nucleotide-binding</keyword>
<gene>
    <name evidence="1" type="primary">obg</name>
    <name type="ordered locus">Mkms_3621</name>
</gene>
<protein>
    <recommendedName>
        <fullName evidence="1">GTPase Obg</fullName>
        <ecNumber evidence="1">3.6.5.-</ecNumber>
    </recommendedName>
    <alternativeName>
        <fullName evidence="1">GTP-binding protein Obg</fullName>
    </alternativeName>
</protein>
<feature type="chain" id="PRO_0000386060" description="GTPase Obg">
    <location>
        <begin position="1"/>
        <end position="485"/>
    </location>
</feature>
<feature type="domain" description="Obg" evidence="3">
    <location>
        <begin position="2"/>
        <end position="159"/>
    </location>
</feature>
<feature type="domain" description="OBG-type G" evidence="1">
    <location>
        <begin position="160"/>
        <end position="341"/>
    </location>
</feature>
<feature type="domain" description="OCT" evidence="2">
    <location>
        <begin position="359"/>
        <end position="437"/>
    </location>
</feature>
<feature type="region of interest" description="Disordered" evidence="4">
    <location>
        <begin position="439"/>
        <end position="485"/>
    </location>
</feature>
<feature type="compositionally biased region" description="Basic and acidic residues" evidence="4">
    <location>
        <begin position="452"/>
        <end position="468"/>
    </location>
</feature>
<feature type="binding site" evidence="1">
    <location>
        <begin position="166"/>
        <end position="173"/>
    </location>
    <ligand>
        <name>GTP</name>
        <dbReference type="ChEBI" id="CHEBI:37565"/>
    </ligand>
</feature>
<feature type="binding site" evidence="1">
    <location>
        <position position="173"/>
    </location>
    <ligand>
        <name>Mg(2+)</name>
        <dbReference type="ChEBI" id="CHEBI:18420"/>
    </ligand>
</feature>
<feature type="binding site" evidence="1">
    <location>
        <begin position="191"/>
        <end position="195"/>
    </location>
    <ligand>
        <name>GTP</name>
        <dbReference type="ChEBI" id="CHEBI:37565"/>
    </ligand>
</feature>
<feature type="binding site" evidence="1">
    <location>
        <position position="193"/>
    </location>
    <ligand>
        <name>Mg(2+)</name>
        <dbReference type="ChEBI" id="CHEBI:18420"/>
    </ligand>
</feature>
<feature type="binding site" evidence="1">
    <location>
        <begin position="212"/>
        <end position="215"/>
    </location>
    <ligand>
        <name>GTP</name>
        <dbReference type="ChEBI" id="CHEBI:37565"/>
    </ligand>
</feature>
<feature type="binding site" evidence="1">
    <location>
        <begin position="292"/>
        <end position="295"/>
    </location>
    <ligand>
        <name>GTP</name>
        <dbReference type="ChEBI" id="CHEBI:37565"/>
    </ligand>
</feature>
<feature type="binding site" evidence="1">
    <location>
        <begin position="322"/>
        <end position="324"/>
    </location>
    <ligand>
        <name>GTP</name>
        <dbReference type="ChEBI" id="CHEBI:37565"/>
    </ligand>
</feature>
<sequence>MPRFVDRVVIHARAGNGGNGCASVHREKFKPLGGPDGGNGGRGGSIVLVVDPQVHTLLDFHFHPHVVAPSGKQGAGSNRDGAAGADLEVRVPDGTVVLDEEGRVLADLVGAGTRFEAAAGGRGGLGNAALASRSRRAPGFALLGEKGQVRELTLELKTVADVGLIGFPSAGKSSLVSTISAAKPKIADYPFTTLVPNLGVVSAGDHTFTVADVPGLIPGASEGRGLGLEFLRHIERCAVLVHVVDCATMEPGRDPISDIEALEAELAAYRPTLQGDSTLGDLAERPRAVVLNKIDVPDARELADFVRDEVAERFGWPVFEVSTVAREGLRPFIFALWDMVRTYREAQPPVVPRRPIIRPIAVDETGFSVHPDGQGGFVVRGTRPERWINQTDFDNDEAVGYLGDRLARLGVEEELLRLGARPGCAVTIGDMTFDWEPQTPAGVDVQMSGRGTDTRLEQTDRVSAAERKIARRERRQSTDEPGGEE</sequence>
<evidence type="ECO:0000255" key="1">
    <source>
        <dbReference type="HAMAP-Rule" id="MF_01454"/>
    </source>
</evidence>
<evidence type="ECO:0000255" key="2">
    <source>
        <dbReference type="PROSITE-ProRule" id="PRU01229"/>
    </source>
</evidence>
<evidence type="ECO:0000255" key="3">
    <source>
        <dbReference type="PROSITE-ProRule" id="PRU01231"/>
    </source>
</evidence>
<evidence type="ECO:0000256" key="4">
    <source>
        <dbReference type="SAM" id="MobiDB-lite"/>
    </source>
</evidence>
<reference key="1">
    <citation type="submission" date="2006-12" db="EMBL/GenBank/DDBJ databases">
        <title>Complete sequence of chromosome of Mycobacterium sp. KMS.</title>
        <authorList>
            <consortium name="US DOE Joint Genome Institute"/>
            <person name="Copeland A."/>
            <person name="Lucas S."/>
            <person name="Lapidus A."/>
            <person name="Barry K."/>
            <person name="Detter J.C."/>
            <person name="Glavina del Rio T."/>
            <person name="Hammon N."/>
            <person name="Israni S."/>
            <person name="Dalin E."/>
            <person name="Tice H."/>
            <person name="Pitluck S."/>
            <person name="Kiss H."/>
            <person name="Brettin T."/>
            <person name="Bruce D."/>
            <person name="Han C."/>
            <person name="Tapia R."/>
            <person name="Gilna P."/>
            <person name="Schmutz J."/>
            <person name="Larimer F."/>
            <person name="Land M."/>
            <person name="Hauser L."/>
            <person name="Kyrpides N."/>
            <person name="Mikhailova N."/>
            <person name="Miller C.D."/>
            <person name="Richardson P."/>
        </authorList>
    </citation>
    <scope>NUCLEOTIDE SEQUENCE [LARGE SCALE GENOMIC DNA]</scope>
    <source>
        <strain>KMS</strain>
    </source>
</reference>
<accession>A1UJ07</accession>
<dbReference type="EC" id="3.6.5.-" evidence="1"/>
<dbReference type="EMBL" id="CP000518">
    <property type="protein sequence ID" value="ABL92815.1"/>
    <property type="molecule type" value="Genomic_DNA"/>
</dbReference>
<dbReference type="SMR" id="A1UJ07"/>
<dbReference type="STRING" id="189918.Mkms_3621"/>
<dbReference type="KEGG" id="mkm:Mkms_3621"/>
<dbReference type="HOGENOM" id="CLU_011747_2_1_11"/>
<dbReference type="OrthoDB" id="9807318at2"/>
<dbReference type="GO" id="GO:0005737">
    <property type="term" value="C:cytoplasm"/>
    <property type="evidence" value="ECO:0007669"/>
    <property type="project" value="UniProtKB-SubCell"/>
</dbReference>
<dbReference type="GO" id="GO:0005525">
    <property type="term" value="F:GTP binding"/>
    <property type="evidence" value="ECO:0007669"/>
    <property type="project" value="UniProtKB-UniRule"/>
</dbReference>
<dbReference type="GO" id="GO:0003924">
    <property type="term" value="F:GTPase activity"/>
    <property type="evidence" value="ECO:0007669"/>
    <property type="project" value="UniProtKB-UniRule"/>
</dbReference>
<dbReference type="GO" id="GO:0000287">
    <property type="term" value="F:magnesium ion binding"/>
    <property type="evidence" value="ECO:0007669"/>
    <property type="project" value="InterPro"/>
</dbReference>
<dbReference type="GO" id="GO:0042254">
    <property type="term" value="P:ribosome biogenesis"/>
    <property type="evidence" value="ECO:0007669"/>
    <property type="project" value="UniProtKB-UniRule"/>
</dbReference>
<dbReference type="CDD" id="cd01898">
    <property type="entry name" value="Obg"/>
    <property type="match status" value="1"/>
</dbReference>
<dbReference type="FunFam" id="2.70.210.12:FF:000001">
    <property type="entry name" value="GTPase Obg"/>
    <property type="match status" value="1"/>
</dbReference>
<dbReference type="Gene3D" id="3.30.300.350">
    <property type="entry name" value="GTP-binding protein OBG, C-terminal domain"/>
    <property type="match status" value="1"/>
</dbReference>
<dbReference type="Gene3D" id="2.70.210.12">
    <property type="entry name" value="GTP1/OBG domain"/>
    <property type="match status" value="1"/>
</dbReference>
<dbReference type="Gene3D" id="3.40.50.300">
    <property type="entry name" value="P-loop containing nucleotide triphosphate hydrolases"/>
    <property type="match status" value="1"/>
</dbReference>
<dbReference type="HAMAP" id="MF_01454">
    <property type="entry name" value="GTPase_Obg"/>
    <property type="match status" value="1"/>
</dbReference>
<dbReference type="InterPro" id="IPR031167">
    <property type="entry name" value="G_OBG"/>
</dbReference>
<dbReference type="InterPro" id="IPR006073">
    <property type="entry name" value="GTP-bd"/>
</dbReference>
<dbReference type="InterPro" id="IPR014100">
    <property type="entry name" value="GTP-bd_Obg/CgtA"/>
</dbReference>
<dbReference type="InterPro" id="IPR036346">
    <property type="entry name" value="GTP-bd_prot_GTP1/OBG_C_sf"/>
</dbReference>
<dbReference type="InterPro" id="IPR006074">
    <property type="entry name" value="GTP1-OBG_CS"/>
</dbReference>
<dbReference type="InterPro" id="IPR006169">
    <property type="entry name" value="GTP1_OBG_dom"/>
</dbReference>
<dbReference type="InterPro" id="IPR036726">
    <property type="entry name" value="GTP1_OBG_dom_sf"/>
</dbReference>
<dbReference type="InterPro" id="IPR045086">
    <property type="entry name" value="OBG_GTPase"/>
</dbReference>
<dbReference type="InterPro" id="IPR015349">
    <property type="entry name" value="OCT_dom"/>
</dbReference>
<dbReference type="InterPro" id="IPR027417">
    <property type="entry name" value="P-loop_NTPase"/>
</dbReference>
<dbReference type="NCBIfam" id="TIGR02729">
    <property type="entry name" value="Obg_CgtA"/>
    <property type="match status" value="1"/>
</dbReference>
<dbReference type="NCBIfam" id="TIGR03595">
    <property type="entry name" value="Obg_CgtA_exten"/>
    <property type="match status" value="1"/>
</dbReference>
<dbReference type="NCBIfam" id="NF008954">
    <property type="entry name" value="PRK12296.1"/>
    <property type="match status" value="1"/>
</dbReference>
<dbReference type="NCBIfam" id="NF008955">
    <property type="entry name" value="PRK12297.1"/>
    <property type="match status" value="1"/>
</dbReference>
<dbReference type="NCBIfam" id="NF008956">
    <property type="entry name" value="PRK12299.1"/>
    <property type="match status" value="1"/>
</dbReference>
<dbReference type="PANTHER" id="PTHR11702">
    <property type="entry name" value="DEVELOPMENTALLY REGULATED GTP-BINDING PROTEIN-RELATED"/>
    <property type="match status" value="1"/>
</dbReference>
<dbReference type="PANTHER" id="PTHR11702:SF31">
    <property type="entry name" value="MITOCHONDRIAL RIBOSOME-ASSOCIATED GTPASE 2"/>
    <property type="match status" value="1"/>
</dbReference>
<dbReference type="Pfam" id="PF09269">
    <property type="entry name" value="DUF1967"/>
    <property type="match status" value="1"/>
</dbReference>
<dbReference type="Pfam" id="PF01018">
    <property type="entry name" value="GTP1_OBG"/>
    <property type="match status" value="1"/>
</dbReference>
<dbReference type="Pfam" id="PF01926">
    <property type="entry name" value="MMR_HSR1"/>
    <property type="match status" value="1"/>
</dbReference>
<dbReference type="PRINTS" id="PR00326">
    <property type="entry name" value="GTP1OBG"/>
</dbReference>
<dbReference type="SUPFAM" id="SSF102741">
    <property type="entry name" value="Obg GTP-binding protein C-terminal domain"/>
    <property type="match status" value="1"/>
</dbReference>
<dbReference type="SUPFAM" id="SSF82051">
    <property type="entry name" value="Obg GTP-binding protein N-terminal domain"/>
    <property type="match status" value="1"/>
</dbReference>
<dbReference type="SUPFAM" id="SSF52540">
    <property type="entry name" value="P-loop containing nucleoside triphosphate hydrolases"/>
    <property type="match status" value="1"/>
</dbReference>
<dbReference type="PROSITE" id="PS51710">
    <property type="entry name" value="G_OBG"/>
    <property type="match status" value="1"/>
</dbReference>
<dbReference type="PROSITE" id="PS00905">
    <property type="entry name" value="GTP1_OBG"/>
    <property type="match status" value="1"/>
</dbReference>
<dbReference type="PROSITE" id="PS51883">
    <property type="entry name" value="OBG"/>
    <property type="match status" value="1"/>
</dbReference>
<dbReference type="PROSITE" id="PS51881">
    <property type="entry name" value="OCT"/>
    <property type="match status" value="1"/>
</dbReference>